<reference key="1">
    <citation type="journal article" date="2000" name="Appl. Environ. Microbiol.">
        <title>Contribution of dps to acid stress tolerance and oxidative stress tolerance in Escherichia coli O157:H7.</title>
        <authorList>
            <person name="Choi S.H."/>
            <person name="Baumler D.J."/>
            <person name="Kaspar C.W."/>
        </authorList>
    </citation>
    <scope>NUCLEOTIDE SEQUENCE [GENOMIC DNA]</scope>
    <source>
        <strain>O157:H7 / ATCC 43895 / CDC EDL 933 / EHEC</strain>
    </source>
</reference>
<reference key="2">
    <citation type="journal article" date="2001" name="Nature">
        <title>Genome sequence of enterohaemorrhagic Escherichia coli O157:H7.</title>
        <authorList>
            <person name="Perna N.T."/>
            <person name="Plunkett G. III"/>
            <person name="Burland V."/>
            <person name="Mau B."/>
            <person name="Glasner J.D."/>
            <person name="Rose D.J."/>
            <person name="Mayhew G.F."/>
            <person name="Evans P.S."/>
            <person name="Gregor J."/>
            <person name="Kirkpatrick H.A."/>
            <person name="Posfai G."/>
            <person name="Hackett J."/>
            <person name="Klink S."/>
            <person name="Boutin A."/>
            <person name="Shao Y."/>
            <person name="Miller L."/>
            <person name="Grotbeck E.J."/>
            <person name="Davis N.W."/>
            <person name="Lim A."/>
            <person name="Dimalanta E.T."/>
            <person name="Potamousis K."/>
            <person name="Apodaca J."/>
            <person name="Anantharaman T.S."/>
            <person name="Lin J."/>
            <person name="Yen G."/>
            <person name="Schwartz D.C."/>
            <person name="Welch R.A."/>
            <person name="Blattner F.R."/>
        </authorList>
    </citation>
    <scope>NUCLEOTIDE SEQUENCE [LARGE SCALE GENOMIC DNA]</scope>
    <source>
        <strain>O157:H7 / EDL933 / ATCC 700927 / EHEC</strain>
    </source>
</reference>
<reference key="3">
    <citation type="journal article" date="2001" name="DNA Res.">
        <title>Complete genome sequence of enterohemorrhagic Escherichia coli O157:H7 and genomic comparison with a laboratory strain K-12.</title>
        <authorList>
            <person name="Hayashi T."/>
            <person name="Makino K."/>
            <person name="Ohnishi M."/>
            <person name="Kurokawa K."/>
            <person name="Ishii K."/>
            <person name="Yokoyama K."/>
            <person name="Han C.-G."/>
            <person name="Ohtsubo E."/>
            <person name="Nakayama K."/>
            <person name="Murata T."/>
            <person name="Tanaka M."/>
            <person name="Tobe T."/>
            <person name="Iida T."/>
            <person name="Takami H."/>
            <person name="Honda T."/>
            <person name="Sasakawa C."/>
            <person name="Ogasawara N."/>
            <person name="Yasunaga T."/>
            <person name="Kuhara S."/>
            <person name="Shiba T."/>
            <person name="Hattori M."/>
            <person name="Shinagawa H."/>
        </authorList>
    </citation>
    <scope>NUCLEOTIDE SEQUENCE [LARGE SCALE GENOMIC DNA]</scope>
    <source>
        <strain>O157:H7 / Sakai / RIMD 0509952 / EHEC</strain>
    </source>
</reference>
<keyword id="KW-0963">Cytoplasm</keyword>
<keyword id="KW-0226">DNA condensation</keyword>
<keyword id="KW-0238">DNA-binding</keyword>
<keyword id="KW-0408">Iron</keyword>
<keyword id="KW-0409">Iron storage</keyword>
<keyword id="KW-0479">Metal-binding</keyword>
<keyword id="KW-0560">Oxidoreductase</keyword>
<keyword id="KW-1185">Reference proteome</keyword>
<feature type="initiator methionine" description="Removed" evidence="1">
    <location>
        <position position="1"/>
    </location>
</feature>
<feature type="chain" id="PRO_0000201651" description="DNA protection during starvation protein">
    <location>
        <begin position="2"/>
        <end position="167"/>
    </location>
</feature>
<feature type="binding site" evidence="1">
    <location>
        <position position="51"/>
    </location>
    <ligand>
        <name>Fe cation</name>
        <dbReference type="ChEBI" id="CHEBI:24875"/>
        <label>1</label>
        <note>ligand shared between two dodecameric partners</note>
    </ligand>
</feature>
<feature type="binding site" description="in other chain" evidence="1">
    <location>
        <position position="78"/>
    </location>
    <ligand>
        <name>Fe cation</name>
        <dbReference type="ChEBI" id="CHEBI:24875"/>
        <label>1</label>
        <note>ligand shared between two dodecameric partners</note>
    </ligand>
</feature>
<feature type="binding site" description="in other chain" evidence="1">
    <location>
        <position position="82"/>
    </location>
    <ligand>
        <name>Fe cation</name>
        <dbReference type="ChEBI" id="CHEBI:24875"/>
        <label>1</label>
        <note>ligand shared between two dodecameric partners</note>
    </ligand>
</feature>
<feature type="binding site" evidence="1">
    <location>
        <position position="82"/>
    </location>
    <ligand>
        <name>Fe cation</name>
        <dbReference type="ChEBI" id="CHEBI:24875"/>
        <label>2</label>
    </ligand>
</feature>
<organism>
    <name type="scientific">Escherichia coli O157:H7</name>
    <dbReference type="NCBI Taxonomy" id="83334"/>
    <lineage>
        <taxon>Bacteria</taxon>
        <taxon>Pseudomonadati</taxon>
        <taxon>Pseudomonadota</taxon>
        <taxon>Gammaproteobacteria</taxon>
        <taxon>Enterobacterales</taxon>
        <taxon>Enterobacteriaceae</taxon>
        <taxon>Escherichia</taxon>
    </lineage>
</organism>
<gene>
    <name type="primary">dps</name>
    <name type="ordered locus">Z1034</name>
    <name type="ordered locus">ECs0890</name>
</gene>
<dbReference type="EC" id="1.16.-.-"/>
<dbReference type="EMBL" id="AF140030">
    <property type="protein sequence ID" value="AAD28292.1"/>
    <property type="molecule type" value="Genomic_DNA"/>
</dbReference>
<dbReference type="EMBL" id="AE005174">
    <property type="protein sequence ID" value="AAG55184.1"/>
    <property type="molecule type" value="Genomic_DNA"/>
</dbReference>
<dbReference type="EMBL" id="BA000007">
    <property type="protein sequence ID" value="BAB34313.1"/>
    <property type="molecule type" value="Genomic_DNA"/>
</dbReference>
<dbReference type="PIR" id="B90740">
    <property type="entry name" value="B90740"/>
</dbReference>
<dbReference type="PIR" id="D85590">
    <property type="entry name" value="D85590"/>
</dbReference>
<dbReference type="RefSeq" id="NP_308917.1">
    <property type="nucleotide sequence ID" value="NC_002695.1"/>
</dbReference>
<dbReference type="RefSeq" id="WP_000100800.1">
    <property type="nucleotide sequence ID" value="NZ_VOAI01000006.1"/>
</dbReference>
<dbReference type="SMR" id="P0ABT3"/>
<dbReference type="IntAct" id="P0ABT3">
    <property type="interactions" value="1"/>
</dbReference>
<dbReference type="MINT" id="P0ABT3"/>
<dbReference type="STRING" id="155864.Z1034"/>
<dbReference type="GeneID" id="917630"/>
<dbReference type="GeneID" id="93776616"/>
<dbReference type="KEGG" id="ece:Z1034"/>
<dbReference type="KEGG" id="ecs:ECs_0890"/>
<dbReference type="PATRIC" id="fig|386585.9.peg.1004"/>
<dbReference type="eggNOG" id="COG0783">
    <property type="taxonomic scope" value="Bacteria"/>
</dbReference>
<dbReference type="HOGENOM" id="CLU_098183_1_2_6"/>
<dbReference type="OMA" id="WDDYSIG"/>
<dbReference type="Proteomes" id="UP000000558">
    <property type="component" value="Chromosome"/>
</dbReference>
<dbReference type="Proteomes" id="UP000002519">
    <property type="component" value="Chromosome"/>
</dbReference>
<dbReference type="GO" id="GO:0005737">
    <property type="term" value="C:cytoplasm"/>
    <property type="evidence" value="ECO:0007669"/>
    <property type="project" value="UniProtKB-UniRule"/>
</dbReference>
<dbReference type="GO" id="GO:0009295">
    <property type="term" value="C:nucleoid"/>
    <property type="evidence" value="ECO:0007669"/>
    <property type="project" value="UniProtKB-SubCell"/>
</dbReference>
<dbReference type="GO" id="GO:0003677">
    <property type="term" value="F:DNA binding"/>
    <property type="evidence" value="ECO:0007669"/>
    <property type="project" value="UniProtKB-UniRule"/>
</dbReference>
<dbReference type="GO" id="GO:0008199">
    <property type="term" value="F:ferric iron binding"/>
    <property type="evidence" value="ECO:0007669"/>
    <property type="project" value="UniProtKB-UniRule"/>
</dbReference>
<dbReference type="GO" id="GO:0016722">
    <property type="term" value="F:oxidoreductase activity, acting on metal ions"/>
    <property type="evidence" value="ECO:0007669"/>
    <property type="project" value="InterPro"/>
</dbReference>
<dbReference type="GO" id="GO:0030261">
    <property type="term" value="P:chromosome condensation"/>
    <property type="evidence" value="ECO:0007669"/>
    <property type="project" value="UniProtKB-KW"/>
</dbReference>
<dbReference type="GO" id="GO:0006879">
    <property type="term" value="P:intracellular iron ion homeostasis"/>
    <property type="evidence" value="ECO:0007669"/>
    <property type="project" value="UniProtKB-KW"/>
</dbReference>
<dbReference type="CDD" id="cd01043">
    <property type="entry name" value="DPS"/>
    <property type="match status" value="1"/>
</dbReference>
<dbReference type="FunFam" id="1.20.1260.10:FF:000003">
    <property type="entry name" value="DNA protection during starvation protein"/>
    <property type="match status" value="1"/>
</dbReference>
<dbReference type="Gene3D" id="1.20.1260.10">
    <property type="match status" value="1"/>
</dbReference>
<dbReference type="HAMAP" id="MF_01441">
    <property type="entry name" value="Dps"/>
    <property type="match status" value="1"/>
</dbReference>
<dbReference type="InterPro" id="IPR002177">
    <property type="entry name" value="DPS_DNA-bd"/>
</dbReference>
<dbReference type="InterPro" id="IPR023188">
    <property type="entry name" value="DPS_DNA-bd_CS"/>
</dbReference>
<dbReference type="InterPro" id="IPR023067">
    <property type="entry name" value="Dps_gammaproteobac"/>
</dbReference>
<dbReference type="InterPro" id="IPR012347">
    <property type="entry name" value="Ferritin-like"/>
</dbReference>
<dbReference type="InterPro" id="IPR009078">
    <property type="entry name" value="Ferritin-like_SF"/>
</dbReference>
<dbReference type="InterPro" id="IPR008331">
    <property type="entry name" value="Ferritin_DPS_dom"/>
</dbReference>
<dbReference type="NCBIfam" id="NF006975">
    <property type="entry name" value="PRK09448.1"/>
    <property type="match status" value="1"/>
</dbReference>
<dbReference type="PANTHER" id="PTHR42932:SF3">
    <property type="entry name" value="DNA PROTECTION DURING STARVATION PROTEIN"/>
    <property type="match status" value="1"/>
</dbReference>
<dbReference type="PANTHER" id="PTHR42932">
    <property type="entry name" value="GENERAL STRESS PROTEIN 20U"/>
    <property type="match status" value="1"/>
</dbReference>
<dbReference type="Pfam" id="PF00210">
    <property type="entry name" value="Ferritin"/>
    <property type="match status" value="1"/>
</dbReference>
<dbReference type="PIRSF" id="PIRSF005900">
    <property type="entry name" value="Dps"/>
    <property type="match status" value="1"/>
</dbReference>
<dbReference type="PRINTS" id="PR01346">
    <property type="entry name" value="HELNAPAPROT"/>
</dbReference>
<dbReference type="SUPFAM" id="SSF47240">
    <property type="entry name" value="Ferritin-like"/>
    <property type="match status" value="1"/>
</dbReference>
<dbReference type="PROSITE" id="PS00818">
    <property type="entry name" value="DPS_1"/>
    <property type="match status" value="1"/>
</dbReference>
<dbReference type="PROSITE" id="PS00819">
    <property type="entry name" value="DPS_2"/>
    <property type="match status" value="1"/>
</dbReference>
<evidence type="ECO:0000250" key="1"/>
<evidence type="ECO:0000305" key="2"/>
<proteinExistence type="inferred from homology"/>
<accession>P0ABT3</accession>
<accession>P27430</accession>
<accession>Q549E4</accession>
<comment type="function">
    <text evidence="1">During stationary phase, binds the chromosome non-specifically, forming a highly ordered and stable dps-DNA co-crystal within which chromosomal DNA is condensed and protected from diverse damages. It protects DNA from oxidative damage by sequestering intracellular Fe(2+) ion and storing it in the form of Fe(3+) oxyhydroxide mineral, which can be released after reduction. One hydrogen peroxide oxidizes two Fe(2+) ions, which prevents hydroxyl radical production by the Fenton reaction. Dps also protects the cell from UV and gamma irradiation, iron and copper toxicity, thermal stress and acid and base shocks. Also shows a weak catalase activity (By similarity).</text>
</comment>
<comment type="catalytic activity">
    <reaction>
        <text>2 Fe(2+) + H2O2 + 2 H(+) = 2 Fe(3+) + 2 H2O</text>
        <dbReference type="Rhea" id="RHEA:48712"/>
        <dbReference type="ChEBI" id="CHEBI:15377"/>
        <dbReference type="ChEBI" id="CHEBI:15378"/>
        <dbReference type="ChEBI" id="CHEBI:16240"/>
        <dbReference type="ChEBI" id="CHEBI:29033"/>
        <dbReference type="ChEBI" id="CHEBI:29034"/>
    </reaction>
</comment>
<comment type="subunit">
    <text evidence="1">Homododecamer. The 12 subunits form a hollow sphere into which the mineral iron core of up to 500 Fe(3+) can be deposited (By similarity).</text>
</comment>
<comment type="subcellular location">
    <subcellularLocation>
        <location evidence="1">Cytoplasm</location>
        <location evidence="1">Nucleoid</location>
    </subcellularLocation>
</comment>
<comment type="domain">
    <text evidence="1">12 dinuclear ferroxidase centers are located at the interfaces between subunits related by 2-fold symmetry axes.</text>
</comment>
<comment type="similarity">
    <text evidence="2">Belongs to the Dps family.</text>
</comment>
<protein>
    <recommendedName>
        <fullName>DNA protection during starvation protein</fullName>
        <ecNumber>1.16.-.-</ecNumber>
    </recommendedName>
</protein>
<sequence>MSTAKLVKSKATNLLYTRNDVSDSEKKATVELLNRQVIQFIDLSLITKQAHWNMRGANFIAVHEMLDGFRTALIDHLDTMAERAVQLGGVALGTTQVINSKTPLKSYPLDIHNVQDHLKELADRYAIVANDVRKAIGEAKDDDTADILTAASRDLDKFLWFIESNIE</sequence>
<name>DPS_ECO57</name>